<organism>
    <name type="scientific">Symbiobacterium thermophilum (strain DSM 24528 / JCM 14929 / IAM 14863 / T)</name>
    <dbReference type="NCBI Taxonomy" id="292459"/>
    <lineage>
        <taxon>Bacteria</taxon>
        <taxon>Bacillati</taxon>
        <taxon>Bacillota</taxon>
        <taxon>Clostridia</taxon>
        <taxon>Eubacteriales</taxon>
        <taxon>Symbiobacteriaceae</taxon>
        <taxon>Symbiobacterium</taxon>
    </lineage>
</organism>
<gene>
    <name evidence="1" type="primary">fluC1</name>
    <name evidence="1" type="synonym">crcB1</name>
    <name type="ordered locus">STH541</name>
</gene>
<comment type="function">
    <text evidence="1">Fluoride-specific ion channel. Important for reducing fluoride concentration in the cell, thus reducing its toxicity.</text>
</comment>
<comment type="catalytic activity">
    <reaction evidence="1">
        <text>fluoride(in) = fluoride(out)</text>
        <dbReference type="Rhea" id="RHEA:76159"/>
        <dbReference type="ChEBI" id="CHEBI:17051"/>
    </reaction>
    <physiologicalReaction direction="left-to-right" evidence="1">
        <dbReference type="Rhea" id="RHEA:76160"/>
    </physiologicalReaction>
</comment>
<comment type="activity regulation">
    <text evidence="1">Na(+) is not transported, but it plays an essential structural role and its presence is essential for fluoride channel function.</text>
</comment>
<comment type="subcellular location">
    <subcellularLocation>
        <location evidence="1">Cell membrane</location>
        <topology evidence="1">Multi-pass membrane protein</topology>
    </subcellularLocation>
</comment>
<comment type="similarity">
    <text evidence="1">Belongs to the fluoride channel Fluc/FEX (TC 1.A.43) family.</text>
</comment>
<protein>
    <recommendedName>
        <fullName evidence="1">Fluoride-specific ion channel FluC 1</fullName>
    </recommendedName>
</protein>
<evidence type="ECO:0000255" key="1">
    <source>
        <dbReference type="HAMAP-Rule" id="MF_00454"/>
    </source>
</evidence>
<keyword id="KW-1003">Cell membrane</keyword>
<keyword id="KW-0407">Ion channel</keyword>
<keyword id="KW-0406">Ion transport</keyword>
<keyword id="KW-0472">Membrane</keyword>
<keyword id="KW-0479">Metal-binding</keyword>
<keyword id="KW-1185">Reference proteome</keyword>
<keyword id="KW-0915">Sodium</keyword>
<keyword id="KW-0812">Transmembrane</keyword>
<keyword id="KW-1133">Transmembrane helix</keyword>
<keyword id="KW-0813">Transport</keyword>
<sequence>MSWVLIGVAGAAGAVARLLVGAWIDGRPGGRAFPWGTFAVNIAGSLLLGLLTGLVVGRGWLAPEVKVVLGAGFLGAFTTFSTWLLDLHEALRRGDHRAAFVNAALSTGLGLLAAWLGLALGWGR</sequence>
<feature type="chain" id="PRO_0000110198" description="Fluoride-specific ion channel FluC 1">
    <location>
        <begin position="1"/>
        <end position="124"/>
    </location>
</feature>
<feature type="transmembrane region" description="Helical" evidence="1">
    <location>
        <begin position="4"/>
        <end position="24"/>
    </location>
</feature>
<feature type="transmembrane region" description="Helical" evidence="1">
    <location>
        <begin position="36"/>
        <end position="56"/>
    </location>
</feature>
<feature type="transmembrane region" description="Helical" evidence="1">
    <location>
        <begin position="67"/>
        <end position="87"/>
    </location>
</feature>
<feature type="transmembrane region" description="Helical" evidence="1">
    <location>
        <begin position="103"/>
        <end position="123"/>
    </location>
</feature>
<feature type="binding site" evidence="1">
    <location>
        <position position="75"/>
    </location>
    <ligand>
        <name>Na(+)</name>
        <dbReference type="ChEBI" id="CHEBI:29101"/>
        <note>structural</note>
    </ligand>
</feature>
<feature type="binding site" evidence="1">
    <location>
        <position position="78"/>
    </location>
    <ligand>
        <name>Na(+)</name>
        <dbReference type="ChEBI" id="CHEBI:29101"/>
        <note>structural</note>
    </ligand>
</feature>
<accession>Q67S17</accession>
<reference key="1">
    <citation type="journal article" date="2004" name="Nucleic Acids Res.">
        <title>Genome sequence of Symbiobacterium thermophilum, an uncultivable bacterium that depends on microbial commensalism.</title>
        <authorList>
            <person name="Ueda K."/>
            <person name="Yamashita A."/>
            <person name="Ishikawa J."/>
            <person name="Shimada M."/>
            <person name="Watsuji T."/>
            <person name="Morimura K."/>
            <person name="Ikeda H."/>
            <person name="Hattori M."/>
            <person name="Beppu T."/>
        </authorList>
    </citation>
    <scope>NUCLEOTIDE SEQUENCE [LARGE SCALE GENOMIC DNA]</scope>
    <source>
        <strain>DSM 24528 / JCM 14929 / IAM 14863 / T</strain>
    </source>
</reference>
<dbReference type="EMBL" id="AP006840">
    <property type="protein sequence ID" value="BAD39526.1"/>
    <property type="molecule type" value="Genomic_DNA"/>
</dbReference>
<dbReference type="RefSeq" id="WP_011194675.1">
    <property type="nucleotide sequence ID" value="NC_006177.1"/>
</dbReference>
<dbReference type="SMR" id="Q67S17"/>
<dbReference type="STRING" id="292459.STH541"/>
<dbReference type="KEGG" id="sth:STH541"/>
<dbReference type="eggNOG" id="COG0239">
    <property type="taxonomic scope" value="Bacteria"/>
</dbReference>
<dbReference type="HOGENOM" id="CLU_114342_2_3_9"/>
<dbReference type="OrthoDB" id="9815830at2"/>
<dbReference type="Proteomes" id="UP000000417">
    <property type="component" value="Chromosome"/>
</dbReference>
<dbReference type="GO" id="GO:0005886">
    <property type="term" value="C:plasma membrane"/>
    <property type="evidence" value="ECO:0007669"/>
    <property type="project" value="UniProtKB-SubCell"/>
</dbReference>
<dbReference type="GO" id="GO:0062054">
    <property type="term" value="F:fluoride channel activity"/>
    <property type="evidence" value="ECO:0007669"/>
    <property type="project" value="UniProtKB-UniRule"/>
</dbReference>
<dbReference type="GO" id="GO:0046872">
    <property type="term" value="F:metal ion binding"/>
    <property type="evidence" value="ECO:0007669"/>
    <property type="project" value="UniProtKB-KW"/>
</dbReference>
<dbReference type="GO" id="GO:0140114">
    <property type="term" value="P:cellular detoxification of fluoride"/>
    <property type="evidence" value="ECO:0007669"/>
    <property type="project" value="UniProtKB-UniRule"/>
</dbReference>
<dbReference type="HAMAP" id="MF_00454">
    <property type="entry name" value="FluC"/>
    <property type="match status" value="1"/>
</dbReference>
<dbReference type="InterPro" id="IPR003691">
    <property type="entry name" value="FluC"/>
</dbReference>
<dbReference type="PANTHER" id="PTHR28259">
    <property type="entry name" value="FLUORIDE EXPORT PROTEIN 1-RELATED"/>
    <property type="match status" value="1"/>
</dbReference>
<dbReference type="PANTHER" id="PTHR28259:SF1">
    <property type="entry name" value="FLUORIDE EXPORT PROTEIN 1-RELATED"/>
    <property type="match status" value="1"/>
</dbReference>
<dbReference type="Pfam" id="PF02537">
    <property type="entry name" value="CRCB"/>
    <property type="match status" value="1"/>
</dbReference>
<proteinExistence type="inferred from homology"/>
<name>FLUC1_SYMTH</name>